<comment type="function">
    <text evidence="4 5">Component of the ESCRT-I complex, a regulator of vesicular trafficking process.</text>
</comment>
<comment type="subunit">
    <text evidence="4">Component of the ESCRT-I complex (endosomal sorting complex required for transport I).</text>
</comment>
<comment type="subcellular location">
    <subcellularLocation>
        <location evidence="1">Endosome</location>
    </subcellularLocation>
</comment>
<comment type="tissue specificity">
    <text evidence="4">Expressed in embryos.</text>
</comment>
<comment type="similarity">
    <text evidence="2 3">Belongs to the VPS28 family.</text>
</comment>
<sequence>MSSQNANLMREVRLFENHSEREQMENLSELFAVLNALEHLEKMFSRDHVSADEYKSECFKLIDQYKVTMRLVHGATSIEDFAKKYRLHCPAAIERIREGRPITVKDDQGNVLKHIASIVEQFITFLDALRLNTRAVDDLYPGLDDLYNAINTTSRVPIDAIVTTKVKKWHDRLSSMAASDEISDEDARQMIFDVESAYQAFNKALNELKH</sequence>
<gene>
    <name type="primary">vps-28</name>
    <name type="ORF">Y87G2A.10</name>
</gene>
<proteinExistence type="evidence at protein level"/>
<feature type="chain" id="PRO_0000120953" description="Vacuolar protein sorting-associated protein 28 homolog">
    <location>
        <begin position="1"/>
        <end position="210"/>
    </location>
</feature>
<feature type="domain" description="VPS28 N-terminal" evidence="3">
    <location>
        <begin position="1"/>
        <end position="106"/>
    </location>
</feature>
<feature type="domain" description="VPS28 C-terminal" evidence="2">
    <location>
        <begin position="110"/>
        <end position="206"/>
    </location>
</feature>
<reference key="1">
    <citation type="journal article" date="1998" name="Science">
        <title>Genome sequence of the nematode C. elegans: a platform for investigating biology.</title>
        <authorList>
            <consortium name="The C. elegans sequencing consortium"/>
        </authorList>
    </citation>
    <scope>NUCLEOTIDE SEQUENCE [LARGE SCALE GENOMIC DNA]</scope>
    <source>
        <strain>Bristol N2</strain>
    </source>
</reference>
<reference key="2">
    <citation type="journal article" date="2005" name="Traffic">
        <title>CeVPS-27 is an endosomal protein required for the molting and the endocytic trafficking of the low-density lipoprotein receptor-related protein 1 in Caenorhabditis elegans.</title>
        <authorList>
            <person name="Roudier N."/>
            <person name="Lefebvre C."/>
            <person name="Legouis R."/>
        </authorList>
    </citation>
    <scope>IDENTIFICATION</scope>
</reference>
<reference key="3">
    <citation type="journal article" date="2007" name="PLoS ONE">
        <title>MVB-12, a fourth subunit of metazoan ESCRT-I, functions in receptor downregulation.</title>
        <authorList>
            <person name="Audhya A."/>
            <person name="McLeod I.X."/>
            <person name="Yates J.R."/>
            <person name="Oegema K."/>
        </authorList>
    </citation>
    <scope>FUNCTION</scope>
    <scope>SUBUNIT</scope>
    <scope>TISSUE SPECIFICITY</scope>
</reference>
<reference key="4">
    <citation type="journal article" date="2008" name="Curr. Biol.">
        <title>Regulated trafficking of the MSP/Eph receptor during oocyte meiotic maturation in C. elegans.</title>
        <authorList>
            <person name="Cheng H."/>
            <person name="Govindan J.A."/>
            <person name="Greenstein D."/>
        </authorList>
    </citation>
    <scope>FUNCTION</scope>
</reference>
<keyword id="KW-0967">Endosome</keyword>
<keyword id="KW-0653">Protein transport</keyword>
<keyword id="KW-1185">Reference proteome</keyword>
<keyword id="KW-0813">Transport</keyword>
<organism>
    <name type="scientific">Caenorhabditis elegans</name>
    <dbReference type="NCBI Taxonomy" id="6239"/>
    <lineage>
        <taxon>Eukaryota</taxon>
        <taxon>Metazoa</taxon>
        <taxon>Ecdysozoa</taxon>
        <taxon>Nematoda</taxon>
        <taxon>Chromadorea</taxon>
        <taxon>Rhabditida</taxon>
        <taxon>Rhabditina</taxon>
        <taxon>Rhabditomorpha</taxon>
        <taxon>Rhabditoidea</taxon>
        <taxon>Rhabditidae</taxon>
        <taxon>Peloderinae</taxon>
        <taxon>Caenorhabditis</taxon>
    </lineage>
</organism>
<protein>
    <recommendedName>
        <fullName>Vacuolar protein sorting-associated protein 28 homolog</fullName>
    </recommendedName>
    <alternativeName>
        <fullName>ESCRT-I complex subunit VPS28</fullName>
    </alternativeName>
</protein>
<name>VPS28_CAEEL</name>
<dbReference type="EMBL" id="AL110500">
    <property type="protein sequence ID" value="CAB54493.1"/>
    <property type="molecule type" value="Genomic_DNA"/>
</dbReference>
<dbReference type="PIR" id="T27471">
    <property type="entry name" value="T27471"/>
</dbReference>
<dbReference type="RefSeq" id="NP_493382.1">
    <property type="nucleotide sequence ID" value="NM_060981.6"/>
</dbReference>
<dbReference type="SMR" id="Q9NA26"/>
<dbReference type="BioGRID" id="38623">
    <property type="interactions" value="18"/>
</dbReference>
<dbReference type="FunCoup" id="Q9NA26">
    <property type="interactions" value="2618"/>
</dbReference>
<dbReference type="IntAct" id="Q9NA26">
    <property type="interactions" value="1"/>
</dbReference>
<dbReference type="STRING" id="6239.Y87G2A.10a.1"/>
<dbReference type="PaxDb" id="6239-Y87G2A.10a"/>
<dbReference type="PeptideAtlas" id="Q9NA26"/>
<dbReference type="EnsemblMetazoa" id="Y87G2A.10a.1">
    <property type="protein sequence ID" value="Y87G2A.10a.1"/>
    <property type="gene ID" value="WBGene00013598"/>
</dbReference>
<dbReference type="GeneID" id="173229"/>
<dbReference type="KEGG" id="cel:CELE_Y87G2A.10"/>
<dbReference type="AGR" id="WB:WBGene00013598"/>
<dbReference type="CTD" id="173229"/>
<dbReference type="WormBase" id="Y87G2A.10a">
    <property type="protein sequence ID" value="CE23139"/>
    <property type="gene ID" value="WBGene00013598"/>
    <property type="gene designation" value="vps-28"/>
</dbReference>
<dbReference type="eggNOG" id="KOG3284">
    <property type="taxonomic scope" value="Eukaryota"/>
</dbReference>
<dbReference type="GeneTree" id="ENSGT00390000007486"/>
<dbReference type="HOGENOM" id="CLU_076417_2_0_1"/>
<dbReference type="InParanoid" id="Q9NA26"/>
<dbReference type="OMA" id="CDEFPTV"/>
<dbReference type="OrthoDB" id="2671at2759"/>
<dbReference type="PhylomeDB" id="Q9NA26"/>
<dbReference type="Reactome" id="R-CEL-917729">
    <property type="pathway name" value="Endosomal Sorting Complex Required For Transport (ESCRT)"/>
</dbReference>
<dbReference type="PRO" id="PR:Q9NA26"/>
<dbReference type="Proteomes" id="UP000001940">
    <property type="component" value="Chromosome I"/>
</dbReference>
<dbReference type="Bgee" id="WBGene00013598">
    <property type="expression patterns" value="Expressed in germ line (C elegans) and 4 other cell types or tissues"/>
</dbReference>
<dbReference type="GO" id="GO:0000813">
    <property type="term" value="C:ESCRT I complex"/>
    <property type="evidence" value="ECO:0000353"/>
    <property type="project" value="WormBase"/>
</dbReference>
<dbReference type="GO" id="GO:0044877">
    <property type="term" value="F:protein-containing complex binding"/>
    <property type="evidence" value="ECO:0000318"/>
    <property type="project" value="GO_Central"/>
</dbReference>
<dbReference type="GO" id="GO:0043328">
    <property type="term" value="P:protein transport to vacuole involved in ubiquitin-dependent protein catabolic process via the multivesicular body sorting pathway"/>
    <property type="evidence" value="ECO:0000318"/>
    <property type="project" value="GO_Central"/>
</dbReference>
<dbReference type="GO" id="GO:0032801">
    <property type="term" value="P:receptor catabolic process"/>
    <property type="evidence" value="ECO:0000315"/>
    <property type="project" value="WormBase"/>
</dbReference>
<dbReference type="FunFam" id="1.20.120.1130:FF:000001">
    <property type="entry name" value="Vacuolar protein sorting-associated protein 28 homolog"/>
    <property type="match status" value="1"/>
</dbReference>
<dbReference type="Gene3D" id="1.20.120.1130">
    <property type="match status" value="1"/>
</dbReference>
<dbReference type="Gene3D" id="1.20.1440.200">
    <property type="match status" value="1"/>
</dbReference>
<dbReference type="InterPro" id="IPR037202">
    <property type="entry name" value="ESCRT_assembly_dom"/>
</dbReference>
<dbReference type="InterPro" id="IPR007143">
    <property type="entry name" value="Vps28"/>
</dbReference>
<dbReference type="InterPro" id="IPR017899">
    <property type="entry name" value="VPS28_C"/>
</dbReference>
<dbReference type="InterPro" id="IPR037206">
    <property type="entry name" value="VPS28_C_sf"/>
</dbReference>
<dbReference type="InterPro" id="IPR017898">
    <property type="entry name" value="VPS28_N"/>
</dbReference>
<dbReference type="InterPro" id="IPR038358">
    <property type="entry name" value="VPS28_N_sf"/>
</dbReference>
<dbReference type="PANTHER" id="PTHR12937">
    <property type="entry name" value="VACUOLAR PROTEIN SORTING 28, ISOFORM 2 VPS28"/>
    <property type="match status" value="1"/>
</dbReference>
<dbReference type="PANTHER" id="PTHR12937:SF0">
    <property type="entry name" value="VACUOLAR PROTEIN SORTING-ASSOCIATED PROTEIN 28 HOMOLOG"/>
    <property type="match status" value="1"/>
</dbReference>
<dbReference type="Pfam" id="PF03997">
    <property type="entry name" value="VPS28"/>
    <property type="match status" value="1"/>
</dbReference>
<dbReference type="PIRSF" id="PIRSF017535">
    <property type="entry name" value="VPS28"/>
    <property type="match status" value="1"/>
</dbReference>
<dbReference type="SUPFAM" id="SSF140111">
    <property type="entry name" value="Endosomal sorting complex assembly domain"/>
    <property type="match status" value="1"/>
</dbReference>
<dbReference type="SUPFAM" id="SSF140427">
    <property type="entry name" value="VPS28 C-terminal domain-like"/>
    <property type="match status" value="1"/>
</dbReference>
<dbReference type="PROSITE" id="PS51310">
    <property type="entry name" value="VPS28_C"/>
    <property type="match status" value="1"/>
</dbReference>
<dbReference type="PROSITE" id="PS51313">
    <property type="entry name" value="VPS28_N"/>
    <property type="match status" value="1"/>
</dbReference>
<accession>Q9NA26</accession>
<evidence type="ECO:0000250" key="1"/>
<evidence type="ECO:0000255" key="2">
    <source>
        <dbReference type="PROSITE-ProRule" id="PRU00642"/>
    </source>
</evidence>
<evidence type="ECO:0000255" key="3">
    <source>
        <dbReference type="PROSITE-ProRule" id="PRU00645"/>
    </source>
</evidence>
<evidence type="ECO:0000269" key="4">
    <source>
    </source>
</evidence>
<evidence type="ECO:0000269" key="5">
    <source>
    </source>
</evidence>